<comment type="sequence caution" evidence="1">
    <conflict type="erroneous gene model prediction">
        <sequence resource="EMBL-CDS" id="CAA18109"/>
    </conflict>
</comment>
<comment type="sequence caution" evidence="1">
    <conflict type="erroneous gene model prediction">
        <sequence resource="EMBL-CDS" id="CAB79161"/>
    </conflict>
</comment>
<gene>
    <name type="ordered locus">At4g22060</name>
    <name type="ORF">F1N20.160</name>
</gene>
<reference key="1">
    <citation type="journal article" date="1999" name="Nature">
        <title>Sequence and analysis of chromosome 4 of the plant Arabidopsis thaliana.</title>
        <authorList>
            <person name="Mayer K.F.X."/>
            <person name="Schueller C."/>
            <person name="Wambutt R."/>
            <person name="Murphy G."/>
            <person name="Volckaert G."/>
            <person name="Pohl T."/>
            <person name="Duesterhoeft A."/>
            <person name="Stiekema W."/>
            <person name="Entian K.-D."/>
            <person name="Terryn N."/>
            <person name="Harris B."/>
            <person name="Ansorge W."/>
            <person name="Brandt P."/>
            <person name="Grivell L.A."/>
            <person name="Rieger M."/>
            <person name="Weichselgartner M."/>
            <person name="de Simone V."/>
            <person name="Obermaier B."/>
            <person name="Mache R."/>
            <person name="Mueller M."/>
            <person name="Kreis M."/>
            <person name="Delseny M."/>
            <person name="Puigdomenech P."/>
            <person name="Watson M."/>
            <person name="Schmidtheini T."/>
            <person name="Reichert B."/>
            <person name="Portetelle D."/>
            <person name="Perez-Alonso M."/>
            <person name="Boutry M."/>
            <person name="Bancroft I."/>
            <person name="Vos P."/>
            <person name="Hoheisel J."/>
            <person name="Zimmermann W."/>
            <person name="Wedler H."/>
            <person name="Ridley P."/>
            <person name="Langham S.-A."/>
            <person name="McCullagh B."/>
            <person name="Bilham L."/>
            <person name="Robben J."/>
            <person name="van der Schueren J."/>
            <person name="Grymonprez B."/>
            <person name="Chuang Y.-J."/>
            <person name="Vandenbussche F."/>
            <person name="Braeken M."/>
            <person name="Weltjens I."/>
            <person name="Voet M."/>
            <person name="Bastiaens I."/>
            <person name="Aert R."/>
            <person name="Defoor E."/>
            <person name="Weitzenegger T."/>
            <person name="Bothe G."/>
            <person name="Ramsperger U."/>
            <person name="Hilbert H."/>
            <person name="Braun M."/>
            <person name="Holzer E."/>
            <person name="Brandt A."/>
            <person name="Peters S."/>
            <person name="van Staveren M."/>
            <person name="Dirkse W."/>
            <person name="Mooijman P."/>
            <person name="Klein Lankhorst R."/>
            <person name="Rose M."/>
            <person name="Hauf J."/>
            <person name="Koetter P."/>
            <person name="Berneiser S."/>
            <person name="Hempel S."/>
            <person name="Feldpausch M."/>
            <person name="Lamberth S."/>
            <person name="Van den Daele H."/>
            <person name="De Keyser A."/>
            <person name="Buysshaert C."/>
            <person name="Gielen J."/>
            <person name="Villarroel R."/>
            <person name="De Clercq R."/>
            <person name="van Montagu M."/>
            <person name="Rogers J."/>
            <person name="Cronin A."/>
            <person name="Quail M.A."/>
            <person name="Bray-Allen S."/>
            <person name="Clark L."/>
            <person name="Doggett J."/>
            <person name="Hall S."/>
            <person name="Kay M."/>
            <person name="Lennard N."/>
            <person name="McLay K."/>
            <person name="Mayes R."/>
            <person name="Pettett A."/>
            <person name="Rajandream M.A."/>
            <person name="Lyne M."/>
            <person name="Benes V."/>
            <person name="Rechmann S."/>
            <person name="Borkova D."/>
            <person name="Bloecker H."/>
            <person name="Scharfe M."/>
            <person name="Grimm M."/>
            <person name="Loehnert T.-H."/>
            <person name="Dose S."/>
            <person name="de Haan M."/>
            <person name="Maarse A.C."/>
            <person name="Schaefer M."/>
            <person name="Mueller-Auer S."/>
            <person name="Gabel C."/>
            <person name="Fuchs M."/>
            <person name="Fartmann B."/>
            <person name="Granderath K."/>
            <person name="Dauner D."/>
            <person name="Herzl A."/>
            <person name="Neumann S."/>
            <person name="Argiriou A."/>
            <person name="Vitale D."/>
            <person name="Liguori R."/>
            <person name="Piravandi E."/>
            <person name="Massenet O."/>
            <person name="Quigley F."/>
            <person name="Clabauld G."/>
            <person name="Muendlein A."/>
            <person name="Felber R."/>
            <person name="Schnabl S."/>
            <person name="Hiller R."/>
            <person name="Schmidt W."/>
            <person name="Lecharny A."/>
            <person name="Aubourg S."/>
            <person name="Chefdor F."/>
            <person name="Cooke R."/>
            <person name="Berger C."/>
            <person name="Monfort A."/>
            <person name="Casacuberta E."/>
            <person name="Gibbons T."/>
            <person name="Weber N."/>
            <person name="Vandenbol M."/>
            <person name="Bargues M."/>
            <person name="Terol J."/>
            <person name="Torres A."/>
            <person name="Perez-Perez A."/>
            <person name="Purnelle B."/>
            <person name="Bent E."/>
            <person name="Johnson S."/>
            <person name="Tacon D."/>
            <person name="Jesse T."/>
            <person name="Heijnen L."/>
            <person name="Schwarz S."/>
            <person name="Scholler P."/>
            <person name="Heber S."/>
            <person name="Francs P."/>
            <person name="Bielke C."/>
            <person name="Frishman D."/>
            <person name="Haase D."/>
            <person name="Lemcke K."/>
            <person name="Mewes H.-W."/>
            <person name="Stocker S."/>
            <person name="Zaccaria P."/>
            <person name="Bevan M."/>
            <person name="Wilson R.K."/>
            <person name="de la Bastide M."/>
            <person name="Habermann K."/>
            <person name="Parnell L."/>
            <person name="Dedhia N."/>
            <person name="Gnoj L."/>
            <person name="Schutz K."/>
            <person name="Huang E."/>
            <person name="Spiegel L."/>
            <person name="Sekhon M."/>
            <person name="Murray J."/>
            <person name="Sheet P."/>
            <person name="Cordes M."/>
            <person name="Abu-Threideh J."/>
            <person name="Stoneking T."/>
            <person name="Kalicki J."/>
            <person name="Graves T."/>
            <person name="Harmon G."/>
            <person name="Edwards J."/>
            <person name="Latreille P."/>
            <person name="Courtney L."/>
            <person name="Cloud J."/>
            <person name="Abbott A."/>
            <person name="Scott K."/>
            <person name="Johnson D."/>
            <person name="Minx P."/>
            <person name="Bentley D."/>
            <person name="Fulton B."/>
            <person name="Miller N."/>
            <person name="Greco T."/>
            <person name="Kemp K."/>
            <person name="Kramer J."/>
            <person name="Fulton L."/>
            <person name="Mardis E."/>
            <person name="Dante M."/>
            <person name="Pepin K."/>
            <person name="Hillier L.W."/>
            <person name="Nelson J."/>
            <person name="Spieth J."/>
            <person name="Ryan E."/>
            <person name="Andrews S."/>
            <person name="Geisel C."/>
            <person name="Layman D."/>
            <person name="Du H."/>
            <person name="Ali J."/>
            <person name="Berghoff A."/>
            <person name="Jones K."/>
            <person name="Drone K."/>
            <person name="Cotton M."/>
            <person name="Joshu C."/>
            <person name="Antonoiu B."/>
            <person name="Zidanic M."/>
            <person name="Strong C."/>
            <person name="Sun H."/>
            <person name="Lamar B."/>
            <person name="Yordan C."/>
            <person name="Ma P."/>
            <person name="Zhong J."/>
            <person name="Preston R."/>
            <person name="Vil D."/>
            <person name="Shekher M."/>
            <person name="Matero A."/>
            <person name="Shah R."/>
            <person name="Swaby I.K."/>
            <person name="O'Shaughnessy A."/>
            <person name="Rodriguez M."/>
            <person name="Hoffman J."/>
            <person name="Till S."/>
            <person name="Granat S."/>
            <person name="Shohdy N."/>
            <person name="Hasegawa A."/>
            <person name="Hameed A."/>
            <person name="Lodhi M."/>
            <person name="Johnson A."/>
            <person name="Chen E."/>
            <person name="Marra M.A."/>
            <person name="Martienssen R."/>
            <person name="McCombie W.R."/>
        </authorList>
    </citation>
    <scope>NUCLEOTIDE SEQUENCE [LARGE SCALE GENOMIC DNA]</scope>
    <source>
        <strain>cv. Columbia</strain>
    </source>
</reference>
<reference key="2">
    <citation type="journal article" date="2017" name="Plant J.">
        <title>Araport11: a complete reannotation of the Arabidopsis thaliana reference genome.</title>
        <authorList>
            <person name="Cheng C.Y."/>
            <person name="Krishnakumar V."/>
            <person name="Chan A.P."/>
            <person name="Thibaud-Nissen F."/>
            <person name="Schobel S."/>
            <person name="Town C.D."/>
        </authorList>
    </citation>
    <scope>GENOME REANNOTATION</scope>
    <source>
        <strain>cv. Columbia</strain>
    </source>
</reference>
<feature type="chain" id="PRO_0000396049" description="Probable F-box protein At4g22060">
    <location>
        <begin position="1"/>
        <end position="399"/>
    </location>
</feature>
<feature type="domain" description="F-box">
    <location>
        <begin position="12"/>
        <end position="48"/>
    </location>
</feature>
<evidence type="ECO:0000305" key="1"/>
<proteinExistence type="predicted"/>
<name>FB334_ARATH</name>
<organism>
    <name type="scientific">Arabidopsis thaliana</name>
    <name type="common">Mouse-ear cress</name>
    <dbReference type="NCBI Taxonomy" id="3702"/>
    <lineage>
        <taxon>Eukaryota</taxon>
        <taxon>Viridiplantae</taxon>
        <taxon>Streptophyta</taxon>
        <taxon>Embryophyta</taxon>
        <taxon>Tracheophyta</taxon>
        <taxon>Spermatophyta</taxon>
        <taxon>Magnoliopsida</taxon>
        <taxon>eudicotyledons</taxon>
        <taxon>Gunneridae</taxon>
        <taxon>Pentapetalae</taxon>
        <taxon>rosids</taxon>
        <taxon>malvids</taxon>
        <taxon>Brassicales</taxon>
        <taxon>Brassicaceae</taxon>
        <taxon>Camelineae</taxon>
        <taxon>Arabidopsis</taxon>
    </lineage>
</organism>
<keyword id="KW-1185">Reference proteome</keyword>
<protein>
    <recommendedName>
        <fullName>Probable F-box protein At4g22060</fullName>
    </recommendedName>
</protein>
<accession>O65454</accession>
<accession>F4JKE0</accession>
<dbReference type="EMBL" id="AL022140">
    <property type="protein sequence ID" value="CAA18109.1"/>
    <property type="status" value="ALT_SEQ"/>
    <property type="molecule type" value="Genomic_DNA"/>
</dbReference>
<dbReference type="EMBL" id="AL161556">
    <property type="protein sequence ID" value="CAB79161.1"/>
    <property type="status" value="ALT_SEQ"/>
    <property type="molecule type" value="Genomic_DNA"/>
</dbReference>
<dbReference type="EMBL" id="CP002687">
    <property type="protein sequence ID" value="AEE84545.1"/>
    <property type="molecule type" value="Genomic_DNA"/>
</dbReference>
<dbReference type="PIR" id="T49113">
    <property type="entry name" value="T49113"/>
</dbReference>
<dbReference type="RefSeq" id="NP_193937.2">
    <property type="nucleotide sequence ID" value="NM_118327.3"/>
</dbReference>
<dbReference type="FunCoup" id="O65454">
    <property type="interactions" value="35"/>
</dbReference>
<dbReference type="STRING" id="3702.O65454"/>
<dbReference type="PaxDb" id="3702-AT4G22060.1"/>
<dbReference type="EnsemblPlants" id="AT4G22060.1">
    <property type="protein sequence ID" value="AT4G22060.1"/>
    <property type="gene ID" value="AT4G22060"/>
</dbReference>
<dbReference type="GeneID" id="828295"/>
<dbReference type="Gramene" id="AT4G22060.1">
    <property type="protein sequence ID" value="AT4G22060.1"/>
    <property type="gene ID" value="AT4G22060"/>
</dbReference>
<dbReference type="KEGG" id="ath:AT4G22060"/>
<dbReference type="Araport" id="AT4G22060"/>
<dbReference type="TAIR" id="AT4G22060">
    <property type="gene designation" value="ATFDB29"/>
</dbReference>
<dbReference type="eggNOG" id="ENOG502R1JZ">
    <property type="taxonomic scope" value="Eukaryota"/>
</dbReference>
<dbReference type="HOGENOM" id="CLU_019286_7_1_1"/>
<dbReference type="InParanoid" id="O65454"/>
<dbReference type="OMA" id="IMNLFTR"/>
<dbReference type="PRO" id="PR:O65454"/>
<dbReference type="Proteomes" id="UP000006548">
    <property type="component" value="Chromosome 4"/>
</dbReference>
<dbReference type="ExpressionAtlas" id="O65454">
    <property type="expression patterns" value="baseline and differential"/>
</dbReference>
<dbReference type="Gene3D" id="1.20.1280.50">
    <property type="match status" value="1"/>
</dbReference>
<dbReference type="InterPro" id="IPR036047">
    <property type="entry name" value="F-box-like_dom_sf"/>
</dbReference>
<dbReference type="InterPro" id="IPR050942">
    <property type="entry name" value="F-box_BR-signaling"/>
</dbReference>
<dbReference type="InterPro" id="IPR001810">
    <property type="entry name" value="F-box_dom"/>
</dbReference>
<dbReference type="InterPro" id="IPR005174">
    <property type="entry name" value="KIB1-4_b-propeller"/>
</dbReference>
<dbReference type="PANTHER" id="PTHR44259:SF22">
    <property type="entry name" value="F-BOX DOMAIN-CONTAINING PROTEIN"/>
    <property type="match status" value="1"/>
</dbReference>
<dbReference type="PANTHER" id="PTHR44259">
    <property type="entry name" value="OS07G0183000 PROTEIN-RELATED"/>
    <property type="match status" value="1"/>
</dbReference>
<dbReference type="Pfam" id="PF03478">
    <property type="entry name" value="Beta-prop_KIB1-4"/>
    <property type="match status" value="1"/>
</dbReference>
<dbReference type="Pfam" id="PF00646">
    <property type="entry name" value="F-box"/>
    <property type="match status" value="1"/>
</dbReference>
<dbReference type="SUPFAM" id="SSF81383">
    <property type="entry name" value="F-box domain"/>
    <property type="match status" value="1"/>
</dbReference>
<sequence length="399" mass="47473">MDPPSLMSDGSSWSKLPLDLLIMVFERLGFVDFQRTKSVCLAWLYASRMSAPNKQIPWLIMFPEKGKDFCLLFNSEEKEKIYRIQNLGVEFANSHCLAIYGSWLFMRDPRYKLYIMNLFTRERINLPSVESQFGRIKIEQINDDLFYRKVDDEYDYHPKRHMIDISDHILWIDDKTKDYVVMWSFECGYTYMVYCRTGDNIWNYRSLDISTVNIVYKDHKMYLYSYTRDVKVLDFCEDIPRQIFETQVNYDILMEKGFRSDVDDVLNDKKEHLVVTLNGDVLRVKSKIWDNSDVWSFCIYKLNSSNTYWEKLTSLGDEAILLDLGITVLANTIEGINRNSIYFSGYHRPHYFRFDHVWSEKDICVFNLDTQEVERPHQSICSSIQISGARWFVPNFKHI</sequence>